<accession>Q9UPY6</accession>
<accession>O94974</accession>
<accession>Q86VQ2</accession>
<sequence>MPLVKRNIEPRHLCRGALPEGITSELECVTNSTLAAIIRQLSSLSKHAEDIFGELFNEANNFYIRANSLQDRIDRLAVKVTQLDSTVEEVSLQDINMKKAFKSSTVQDQQVVSKNSIPNPVADIYNQSDKPPPLNILTPYRDDKKDGLKFYTDPSYFFDLWKEKMLQDTEDKRKEKRRQKEQKRIDGTTREVKKVRKARNRRQEWNMMAYDKELRPDNRLSQSVYHGASSEGSLSPDTRSHASDVTDYSYPATPNHSLHPQPVTPSYAAGDVPPHGPASQAAEHEYRPPSASARHMALNRPQQPPPPPPPQAPEGSQASAPMAPADYGMLPAQIIEYYNPSGPPPPPPPPVIPSAQTAFVSPLQMPMQPPFPASASSTHAAPPHPPSTGLLVTAPPPPGPPPPPPGPPGPGSSLSSSPMHGPPVAEAKRQEPAQPPISDARSDLLAAIRMGIQLKKVQEQREQEAKREPVGNDVATILSRRIAVEYSDSDDDSEFDENDWSD</sequence>
<proteinExistence type="evidence at protein level"/>
<comment type="function">
    <text evidence="4 5">Downstream effector molecules involved in the transmission of signals from tyrosine kinase receptors and small GTPases to the actin cytoskeleton. Plays a role in the regulation of cell morphology and cytoskeletal organization. Required in the control of cell shape.</text>
</comment>
<comment type="subunit">
    <text>Binds actin and the Arp2/3 complex.</text>
</comment>
<comment type="interaction">
    <interactant intactId="EBI-12026286">
        <id>Q9UPY6-2</id>
    </interactant>
    <interactant intactId="EBI-11096309">
        <id>Q9NYB9-2</id>
        <label>ABI2</label>
    </interactant>
    <organismsDiffer>false</organismsDiffer>
    <experiments>3</experiments>
</comment>
<comment type="interaction">
    <interactant intactId="EBI-12026286">
        <id>Q9UPY6-2</id>
    </interactant>
    <interactant intactId="EBI-358049">
        <id>Q13895</id>
        <label>BYSL</label>
    </interactant>
    <organismsDiffer>false</organismsDiffer>
    <experiments>3</experiments>
</comment>
<comment type="interaction">
    <interactant intactId="EBI-12026286">
        <id>Q9UPY6-2</id>
    </interactant>
    <interactant intactId="EBI-456371">
        <id>P61024</id>
        <label>CKS1B</label>
    </interactant>
    <organismsDiffer>false</organismsDiffer>
    <experiments>3</experiments>
</comment>
<comment type="interaction">
    <interactant intactId="EBI-12026286">
        <id>Q9UPY6-2</id>
    </interactant>
    <interactant intactId="EBI-2556193">
        <id>Q63ZY3</id>
        <label>KANK2</label>
    </interactant>
    <organismsDiffer>false</organismsDiffer>
    <experiments>3</experiments>
</comment>
<comment type="interaction">
    <interactant intactId="EBI-12026286">
        <id>Q9UPY6-2</id>
    </interactant>
    <interactant intactId="EBI-14069005">
        <id>Q9BVG8-5</id>
        <label>KIFC3</label>
    </interactant>
    <organismsDiffer>false</organismsDiffer>
    <experiments>3</experiments>
</comment>
<comment type="interaction">
    <interactant intactId="EBI-12026286">
        <id>Q9UPY6-2</id>
    </interactant>
    <interactant intactId="EBI-3437896">
        <id>Q86YV0</id>
        <label>RASAL3</label>
    </interactant>
    <organismsDiffer>false</organismsDiffer>
    <experiments>3</experiments>
</comment>
<comment type="subcellular location">
    <subcellularLocation>
        <location>Cytoplasm</location>
        <location>Cytoskeleton</location>
    </subcellularLocation>
</comment>
<comment type="alternative products">
    <event type="alternative splicing"/>
    <isoform>
        <id>Q9UPY6-1</id>
        <name>1</name>
        <sequence type="displayed"/>
    </isoform>
    <isoform>
        <id>Q9UPY6-2</id>
        <name>2</name>
        <sequence type="described" ref="VSP_054517"/>
    </isoform>
</comment>
<comment type="tissue specificity">
    <text>Expressed in ovary and brain.</text>
</comment>
<comment type="domain">
    <text>Binds the Arp2/3 complex through the C-terminal region and actin through verprolin homology (VPH) domain.</text>
</comment>
<comment type="PTM">
    <text evidence="4">Phosphorylation by ABL1 promotes lamellipodia formation and cell migration.</text>
</comment>
<comment type="similarity">
    <text evidence="7">Belongs to the SCAR/WAVE family.</text>
</comment>
<comment type="sequence caution" evidence="7">
    <conflict type="erroneous initiation">
        <sequence resource="EMBL-CDS" id="BAA74923"/>
    </conflict>
</comment>
<dbReference type="EMBL" id="AB026543">
    <property type="protein sequence ID" value="BAA81796.1"/>
    <property type="molecule type" value="mRNA"/>
</dbReference>
<dbReference type="EMBL" id="AF454702">
    <property type="protein sequence ID" value="AAL51032.1"/>
    <property type="molecule type" value="mRNA"/>
</dbReference>
<dbReference type="EMBL" id="AB020707">
    <property type="protein sequence ID" value="BAA74923.2"/>
    <property type="status" value="ALT_INIT"/>
    <property type="molecule type" value="mRNA"/>
</dbReference>
<dbReference type="EMBL" id="AL159978">
    <property type="status" value="NOT_ANNOTATED_CDS"/>
    <property type="molecule type" value="Genomic_DNA"/>
</dbReference>
<dbReference type="EMBL" id="AL163538">
    <property type="status" value="NOT_ANNOTATED_CDS"/>
    <property type="molecule type" value="Genomic_DNA"/>
</dbReference>
<dbReference type="EMBL" id="AL353789">
    <property type="status" value="NOT_ANNOTATED_CDS"/>
    <property type="molecule type" value="Genomic_DNA"/>
</dbReference>
<dbReference type="EMBL" id="CH471075">
    <property type="protein sequence ID" value="EAX08388.1"/>
    <property type="molecule type" value="Genomic_DNA"/>
</dbReference>
<dbReference type="EMBL" id="BC050283">
    <property type="protein sequence ID" value="AAH50283.1"/>
    <property type="molecule type" value="mRNA"/>
</dbReference>
<dbReference type="EMBL" id="AF134305">
    <property type="protein sequence ID" value="AAD33054.1"/>
    <property type="molecule type" value="mRNA"/>
</dbReference>
<dbReference type="CCDS" id="CCDS76626.1">
    <molecule id="Q9UPY6-2"/>
</dbReference>
<dbReference type="CCDS" id="CCDS9318.1">
    <molecule id="Q9UPY6-1"/>
</dbReference>
<dbReference type="RefSeq" id="NP_001278894.1">
    <molecule id="Q9UPY6-2"/>
    <property type="nucleotide sequence ID" value="NM_001291965.1"/>
</dbReference>
<dbReference type="RefSeq" id="NP_006637.2">
    <molecule id="Q9UPY6-1"/>
    <property type="nucleotide sequence ID" value="NM_006646.5"/>
</dbReference>
<dbReference type="RefSeq" id="XP_011533191.1">
    <molecule id="Q9UPY6-1"/>
    <property type="nucleotide sequence ID" value="XM_011534889.3"/>
</dbReference>
<dbReference type="RefSeq" id="XP_011533192.1">
    <molecule id="Q9UPY6-1"/>
    <property type="nucleotide sequence ID" value="XM_011534890.2"/>
</dbReference>
<dbReference type="RefSeq" id="XP_024305083.1">
    <molecule id="Q9UPY6-1"/>
    <property type="nucleotide sequence ID" value="XM_024449315.2"/>
</dbReference>
<dbReference type="RefSeq" id="XP_047286015.1">
    <molecule id="Q9UPY6-1"/>
    <property type="nucleotide sequence ID" value="XM_047430059.1"/>
</dbReference>
<dbReference type="RefSeq" id="XP_047286016.1">
    <molecule id="Q9UPY6-1"/>
    <property type="nucleotide sequence ID" value="XM_047430060.1"/>
</dbReference>
<dbReference type="RefSeq" id="XP_047286018.1">
    <molecule id="Q9UPY6-2"/>
    <property type="nucleotide sequence ID" value="XM_047430062.1"/>
</dbReference>
<dbReference type="RefSeq" id="XP_047286019.1">
    <molecule id="Q9UPY6-2"/>
    <property type="nucleotide sequence ID" value="XM_047430063.1"/>
</dbReference>
<dbReference type="RefSeq" id="XP_047286020.1">
    <molecule id="Q9UPY6-2"/>
    <property type="nucleotide sequence ID" value="XM_047430064.1"/>
</dbReference>
<dbReference type="RefSeq" id="XP_054230019.1">
    <molecule id="Q9UPY6-1"/>
    <property type="nucleotide sequence ID" value="XM_054374044.1"/>
</dbReference>
<dbReference type="RefSeq" id="XP_054230020.1">
    <molecule id="Q9UPY6-1"/>
    <property type="nucleotide sequence ID" value="XM_054374045.1"/>
</dbReference>
<dbReference type="RefSeq" id="XP_054230021.1">
    <molecule id="Q9UPY6-1"/>
    <property type="nucleotide sequence ID" value="XM_054374046.1"/>
</dbReference>
<dbReference type="RefSeq" id="XP_054230022.1">
    <molecule id="Q9UPY6-1"/>
    <property type="nucleotide sequence ID" value="XM_054374047.1"/>
</dbReference>
<dbReference type="RefSeq" id="XP_054230023.1">
    <molecule id="Q9UPY6-1"/>
    <property type="nucleotide sequence ID" value="XM_054374048.1"/>
</dbReference>
<dbReference type="RefSeq" id="XP_054230024.1">
    <molecule id="Q9UPY6-2"/>
    <property type="nucleotide sequence ID" value="XM_054374049.1"/>
</dbReference>
<dbReference type="RefSeq" id="XP_054230025.1">
    <molecule id="Q9UPY6-2"/>
    <property type="nucleotide sequence ID" value="XM_054374050.1"/>
</dbReference>
<dbReference type="RefSeq" id="XP_054230026.1">
    <molecule id="Q9UPY6-2"/>
    <property type="nucleotide sequence ID" value="XM_054374051.1"/>
</dbReference>
<dbReference type="SMR" id="Q9UPY6"/>
<dbReference type="BioGRID" id="116024">
    <property type="interactions" value="55"/>
</dbReference>
<dbReference type="CORUM" id="Q9UPY6"/>
<dbReference type="DIP" id="DIP-61425N"/>
<dbReference type="FunCoup" id="Q9UPY6">
    <property type="interactions" value="804"/>
</dbReference>
<dbReference type="IntAct" id="Q9UPY6">
    <property type="interactions" value="46"/>
</dbReference>
<dbReference type="STRING" id="9606.ENSP00000335055"/>
<dbReference type="ChEMBL" id="CHEMBL5169205"/>
<dbReference type="GlyGen" id="Q9UPY6">
    <property type="glycosylation" value="1 site"/>
</dbReference>
<dbReference type="iPTMnet" id="Q9UPY6"/>
<dbReference type="PhosphoSitePlus" id="Q9UPY6"/>
<dbReference type="BioMuta" id="WASF3"/>
<dbReference type="DMDM" id="59800455"/>
<dbReference type="jPOST" id="Q9UPY6"/>
<dbReference type="MassIVE" id="Q9UPY6"/>
<dbReference type="PaxDb" id="9606-ENSP00000335055"/>
<dbReference type="PeptideAtlas" id="Q9UPY6"/>
<dbReference type="ProteomicsDB" id="70056"/>
<dbReference type="ProteomicsDB" id="85474">
    <molecule id="Q9UPY6-1"/>
</dbReference>
<dbReference type="Pumba" id="Q9UPY6"/>
<dbReference type="Antibodypedia" id="22618">
    <property type="antibodies" value="211 antibodies from 29 providers"/>
</dbReference>
<dbReference type="DNASU" id="10810"/>
<dbReference type="Ensembl" id="ENST00000335327.6">
    <molecule id="Q9UPY6-1"/>
    <property type="protein sequence ID" value="ENSP00000335055.5"/>
    <property type="gene ID" value="ENSG00000132970.14"/>
</dbReference>
<dbReference type="Ensembl" id="ENST00000361042.8">
    <molecule id="Q9UPY6-2"/>
    <property type="protein sequence ID" value="ENSP00000354325.4"/>
    <property type="gene ID" value="ENSG00000132970.14"/>
</dbReference>
<dbReference type="GeneID" id="10810"/>
<dbReference type="KEGG" id="hsa:10810"/>
<dbReference type="MANE-Select" id="ENST00000335327.6">
    <property type="protein sequence ID" value="ENSP00000335055.5"/>
    <property type="RefSeq nucleotide sequence ID" value="NM_006646.6"/>
    <property type="RefSeq protein sequence ID" value="NP_006637.2"/>
</dbReference>
<dbReference type="UCSC" id="uc001uqv.5">
    <molecule id="Q9UPY6-1"/>
    <property type="organism name" value="human"/>
</dbReference>
<dbReference type="AGR" id="HGNC:12734"/>
<dbReference type="CTD" id="10810"/>
<dbReference type="DisGeNET" id="10810"/>
<dbReference type="GeneCards" id="WASF3"/>
<dbReference type="HGNC" id="HGNC:12734">
    <property type="gene designation" value="WASF3"/>
</dbReference>
<dbReference type="HPA" id="ENSG00000132970">
    <property type="expression patterns" value="Tissue enhanced (brain, retina)"/>
</dbReference>
<dbReference type="MIM" id="605068">
    <property type="type" value="gene"/>
</dbReference>
<dbReference type="neXtProt" id="NX_Q9UPY6"/>
<dbReference type="OpenTargets" id="ENSG00000132970"/>
<dbReference type="PharmGKB" id="PA37345"/>
<dbReference type="VEuPathDB" id="HostDB:ENSG00000132970"/>
<dbReference type="eggNOG" id="KOG1830">
    <property type="taxonomic scope" value="Eukaryota"/>
</dbReference>
<dbReference type="GeneTree" id="ENSGT00950000182962"/>
<dbReference type="HOGENOM" id="CLU_036022_2_0_1"/>
<dbReference type="InParanoid" id="Q9UPY6"/>
<dbReference type="OMA" id="FFFDLWK"/>
<dbReference type="OrthoDB" id="1060785at2759"/>
<dbReference type="PAN-GO" id="Q9UPY6">
    <property type="GO annotations" value="6 GO annotations based on evolutionary models"/>
</dbReference>
<dbReference type="PhylomeDB" id="Q9UPY6"/>
<dbReference type="TreeFam" id="TF315031"/>
<dbReference type="PathwayCommons" id="Q9UPY6"/>
<dbReference type="Reactome" id="R-HSA-2029482">
    <property type="pathway name" value="Regulation of actin dynamics for phagocytic cup formation"/>
</dbReference>
<dbReference type="Reactome" id="R-HSA-4420097">
    <property type="pathway name" value="VEGFA-VEGFR2 Pathway"/>
</dbReference>
<dbReference type="Reactome" id="R-HSA-5663213">
    <property type="pathway name" value="RHO GTPases Activate WASPs and WAVEs"/>
</dbReference>
<dbReference type="Reactome" id="R-HSA-9013149">
    <property type="pathway name" value="RAC1 GTPase cycle"/>
</dbReference>
<dbReference type="Reactome" id="R-HSA-9664422">
    <property type="pathway name" value="FCGR3A-mediated phagocytosis"/>
</dbReference>
<dbReference type="SignaLink" id="Q9UPY6"/>
<dbReference type="SIGNOR" id="Q9UPY6"/>
<dbReference type="BioGRID-ORCS" id="10810">
    <property type="hits" value="8 hits in 1148 CRISPR screens"/>
</dbReference>
<dbReference type="CD-CODE" id="FB4E32DD">
    <property type="entry name" value="Presynaptic clusters and postsynaptic densities"/>
</dbReference>
<dbReference type="ChiTaRS" id="WASF3">
    <property type="organism name" value="human"/>
</dbReference>
<dbReference type="GeneWiki" id="WASF3"/>
<dbReference type="GenomeRNAi" id="10810"/>
<dbReference type="Pharos" id="Q9UPY6">
    <property type="development level" value="Tbio"/>
</dbReference>
<dbReference type="PRO" id="PR:Q9UPY6"/>
<dbReference type="Proteomes" id="UP000005640">
    <property type="component" value="Chromosome 13"/>
</dbReference>
<dbReference type="RNAct" id="Q9UPY6">
    <property type="molecule type" value="protein"/>
</dbReference>
<dbReference type="Bgee" id="ENSG00000132970">
    <property type="expression patterns" value="Expressed in substantia nigra pars compacta and 195 other cell types or tissues"/>
</dbReference>
<dbReference type="ExpressionAtlas" id="Q9UPY6">
    <property type="expression patterns" value="baseline and differential"/>
</dbReference>
<dbReference type="GO" id="GO:0005856">
    <property type="term" value="C:cytoskeleton"/>
    <property type="evidence" value="ECO:0007669"/>
    <property type="project" value="UniProtKB-SubCell"/>
</dbReference>
<dbReference type="GO" id="GO:0070062">
    <property type="term" value="C:extracellular exosome"/>
    <property type="evidence" value="ECO:0007005"/>
    <property type="project" value="UniProtKB"/>
</dbReference>
<dbReference type="GO" id="GO:0097386">
    <property type="term" value="C:glial cell projection"/>
    <property type="evidence" value="ECO:0007669"/>
    <property type="project" value="Ensembl"/>
</dbReference>
<dbReference type="GO" id="GO:0098978">
    <property type="term" value="C:glutamatergic synapse"/>
    <property type="evidence" value="ECO:0007669"/>
    <property type="project" value="Ensembl"/>
</dbReference>
<dbReference type="GO" id="GO:0030027">
    <property type="term" value="C:lamellipodium"/>
    <property type="evidence" value="ECO:0000318"/>
    <property type="project" value="GO_Central"/>
</dbReference>
<dbReference type="GO" id="GO:0098794">
    <property type="term" value="C:postsynapse"/>
    <property type="evidence" value="ECO:0007669"/>
    <property type="project" value="Ensembl"/>
</dbReference>
<dbReference type="GO" id="GO:0031209">
    <property type="term" value="C:SCAR complex"/>
    <property type="evidence" value="ECO:0000318"/>
    <property type="project" value="GO_Central"/>
</dbReference>
<dbReference type="GO" id="GO:0003779">
    <property type="term" value="F:actin binding"/>
    <property type="evidence" value="ECO:0007669"/>
    <property type="project" value="UniProtKB-KW"/>
</dbReference>
<dbReference type="GO" id="GO:0071933">
    <property type="term" value="F:Arp2/3 complex binding"/>
    <property type="evidence" value="ECO:0000318"/>
    <property type="project" value="GO_Central"/>
</dbReference>
<dbReference type="GO" id="GO:0034237">
    <property type="term" value="F:protein kinase A regulatory subunit binding"/>
    <property type="evidence" value="ECO:0000318"/>
    <property type="project" value="GO_Central"/>
</dbReference>
<dbReference type="GO" id="GO:0030036">
    <property type="term" value="P:actin cytoskeleton organization"/>
    <property type="evidence" value="ECO:0000318"/>
    <property type="project" value="GO_Central"/>
</dbReference>
<dbReference type="GO" id="GO:0030041">
    <property type="term" value="P:actin filament polymerization"/>
    <property type="evidence" value="ECO:0000304"/>
    <property type="project" value="ProtInc"/>
</dbReference>
<dbReference type="GO" id="GO:0007010">
    <property type="term" value="P:cytoskeleton organization"/>
    <property type="evidence" value="ECO:0000315"/>
    <property type="project" value="UniProtKB"/>
</dbReference>
<dbReference type="GO" id="GO:0030032">
    <property type="term" value="P:lamellipodium assembly"/>
    <property type="evidence" value="ECO:0007669"/>
    <property type="project" value="Ensembl"/>
</dbReference>
<dbReference type="GO" id="GO:0098885">
    <property type="term" value="P:modification of postsynaptic actin cytoskeleton"/>
    <property type="evidence" value="ECO:0007669"/>
    <property type="project" value="Ensembl"/>
</dbReference>
<dbReference type="GO" id="GO:0014003">
    <property type="term" value="P:oligodendrocyte development"/>
    <property type="evidence" value="ECO:0007669"/>
    <property type="project" value="Ensembl"/>
</dbReference>
<dbReference type="GO" id="GO:2000601">
    <property type="term" value="P:positive regulation of Arp2/3 complex-mediated actin nucleation"/>
    <property type="evidence" value="ECO:0000318"/>
    <property type="project" value="GO_Central"/>
</dbReference>
<dbReference type="GO" id="GO:0031643">
    <property type="term" value="P:positive regulation of myelination"/>
    <property type="evidence" value="ECO:0007669"/>
    <property type="project" value="Ensembl"/>
</dbReference>
<dbReference type="GO" id="GO:0065003">
    <property type="term" value="P:protein-containing complex assembly"/>
    <property type="evidence" value="ECO:0000304"/>
    <property type="project" value="ProtInc"/>
</dbReference>
<dbReference type="GO" id="GO:0008360">
    <property type="term" value="P:regulation of cell shape"/>
    <property type="evidence" value="ECO:0000315"/>
    <property type="project" value="UniProtKB"/>
</dbReference>
<dbReference type="CDD" id="cd22073">
    <property type="entry name" value="WH2_WAVE-3"/>
    <property type="match status" value="1"/>
</dbReference>
<dbReference type="FunFam" id="1.20.5.340:FF:000012">
    <property type="entry name" value="Wiskott-Aldrich syndrome protein family member 1"/>
    <property type="match status" value="1"/>
</dbReference>
<dbReference type="Gene3D" id="1.20.5.340">
    <property type="match status" value="1"/>
</dbReference>
<dbReference type="Gene3D" id="6.10.280.150">
    <property type="match status" value="2"/>
</dbReference>
<dbReference type="InterPro" id="IPR028288">
    <property type="entry name" value="SCAR/WAVE_fam"/>
</dbReference>
<dbReference type="InterPro" id="IPR003124">
    <property type="entry name" value="WH2_dom"/>
</dbReference>
<dbReference type="PANTHER" id="PTHR12902">
    <property type="entry name" value="WASP-1"/>
    <property type="match status" value="1"/>
</dbReference>
<dbReference type="PANTHER" id="PTHR12902:SF1">
    <property type="entry name" value="WISKOTT-ALDRICH SYNDROME PROTEIN FAMILY MEMBER"/>
    <property type="match status" value="1"/>
</dbReference>
<dbReference type="Pfam" id="PF02205">
    <property type="entry name" value="WH2"/>
    <property type="match status" value="1"/>
</dbReference>
<dbReference type="SMART" id="SM00246">
    <property type="entry name" value="WH2"/>
    <property type="match status" value="1"/>
</dbReference>
<dbReference type="PROSITE" id="PS51082">
    <property type="entry name" value="WH2"/>
    <property type="match status" value="1"/>
</dbReference>
<gene>
    <name type="primary">WASF3</name>
    <name type="synonym">KIAA0900</name>
    <name type="synonym">SCAR3</name>
    <name type="synonym">WAVE3</name>
</gene>
<organism>
    <name type="scientific">Homo sapiens</name>
    <name type="common">Human</name>
    <dbReference type="NCBI Taxonomy" id="9606"/>
    <lineage>
        <taxon>Eukaryota</taxon>
        <taxon>Metazoa</taxon>
        <taxon>Chordata</taxon>
        <taxon>Craniata</taxon>
        <taxon>Vertebrata</taxon>
        <taxon>Euteleostomi</taxon>
        <taxon>Mammalia</taxon>
        <taxon>Eutheria</taxon>
        <taxon>Euarchontoglires</taxon>
        <taxon>Primates</taxon>
        <taxon>Haplorrhini</taxon>
        <taxon>Catarrhini</taxon>
        <taxon>Hominidae</taxon>
        <taxon>Homo</taxon>
    </lineage>
</organism>
<evidence type="ECO:0000255" key="1"/>
<evidence type="ECO:0000255" key="2">
    <source>
        <dbReference type="PROSITE-ProRule" id="PRU00406"/>
    </source>
</evidence>
<evidence type="ECO:0000256" key="3">
    <source>
        <dbReference type="SAM" id="MobiDB-lite"/>
    </source>
</evidence>
<evidence type="ECO:0000269" key="4">
    <source>
    </source>
</evidence>
<evidence type="ECO:0000269" key="5">
    <source>
    </source>
</evidence>
<evidence type="ECO:0000303" key="6">
    <source>
    </source>
</evidence>
<evidence type="ECO:0000305" key="7"/>
<protein>
    <recommendedName>
        <fullName evidence="7">Actin-binding protein WASF3</fullName>
    </recommendedName>
    <alternativeName>
        <fullName>Protein WAVE-3</fullName>
    </alternativeName>
    <alternativeName>
        <fullName>Verprolin homology domain-containing protein 3</fullName>
    </alternativeName>
    <alternativeName>
        <fullName>Wiskott-Aldrich syndrome protein family member 3</fullName>
        <shortName>WASP family protein member 3</shortName>
    </alternativeName>
</protein>
<reference key="1">
    <citation type="journal article" date="1999" name="Biochem. Biophys. Res. Commun.">
        <title>Identification of two human WAVE/SCAR homologues as general actin regulatory molecules which associate with the Arp2/3 complex.</title>
        <authorList>
            <person name="Suetsugu S."/>
            <person name="Miki H."/>
            <person name="Takenawa T."/>
        </authorList>
    </citation>
    <scope>NUCLEOTIDE SEQUENCE [MRNA] (ISOFORM 1)</scope>
    <source>
        <tissue>Brain</tissue>
    </source>
</reference>
<reference key="2">
    <citation type="journal article" date="2003" name="Mamm. Genome">
        <title>Genomic organization and expression profile of the human and mouse WAVE gene family.</title>
        <authorList>
            <person name="Sossey-Alaoui K."/>
            <person name="Head K."/>
            <person name="Nowak N."/>
            <person name="Cowell J.K."/>
        </authorList>
    </citation>
    <scope>NUCLEOTIDE SEQUENCE [MRNA] (ISOFORM 1)</scope>
</reference>
<reference key="3">
    <citation type="journal article" date="1998" name="DNA Res.">
        <title>Prediction of the coding sequences of unidentified human genes. XII. The complete sequences of 100 new cDNA clones from brain which code for large proteins in vitro.</title>
        <authorList>
            <person name="Nagase T."/>
            <person name="Ishikawa K."/>
            <person name="Suyama M."/>
            <person name="Kikuno R."/>
            <person name="Hirosawa M."/>
            <person name="Miyajima N."/>
            <person name="Tanaka A."/>
            <person name="Kotani H."/>
            <person name="Nomura N."/>
            <person name="Ohara O."/>
        </authorList>
    </citation>
    <scope>NUCLEOTIDE SEQUENCE [LARGE SCALE MRNA] (ISOFORM 1)</scope>
    <source>
        <tissue>Brain</tissue>
    </source>
</reference>
<reference key="4">
    <citation type="journal article" date="2002" name="DNA Res.">
        <title>Construction of expression-ready cDNA clones for KIAA genes: manual curation of 330 KIAA cDNA clones.</title>
        <authorList>
            <person name="Nakajima D."/>
            <person name="Okazaki N."/>
            <person name="Yamakawa H."/>
            <person name="Kikuno R."/>
            <person name="Ohara O."/>
            <person name="Nagase T."/>
        </authorList>
    </citation>
    <scope>SEQUENCE REVISION</scope>
</reference>
<reference key="5">
    <citation type="journal article" date="2004" name="Nature">
        <title>The DNA sequence and analysis of human chromosome 13.</title>
        <authorList>
            <person name="Dunham A."/>
            <person name="Matthews L.H."/>
            <person name="Burton J."/>
            <person name="Ashurst J.L."/>
            <person name="Howe K.L."/>
            <person name="Ashcroft K.J."/>
            <person name="Beare D.M."/>
            <person name="Burford D.C."/>
            <person name="Hunt S.E."/>
            <person name="Griffiths-Jones S."/>
            <person name="Jones M.C."/>
            <person name="Keenan S.J."/>
            <person name="Oliver K."/>
            <person name="Scott C.E."/>
            <person name="Ainscough R."/>
            <person name="Almeida J.P."/>
            <person name="Ambrose K.D."/>
            <person name="Andrews D.T."/>
            <person name="Ashwell R.I.S."/>
            <person name="Babbage A.K."/>
            <person name="Bagguley C.L."/>
            <person name="Bailey J."/>
            <person name="Bannerjee R."/>
            <person name="Barlow K.F."/>
            <person name="Bates K."/>
            <person name="Beasley H."/>
            <person name="Bird C.P."/>
            <person name="Bray-Allen S."/>
            <person name="Brown A.J."/>
            <person name="Brown J.Y."/>
            <person name="Burrill W."/>
            <person name="Carder C."/>
            <person name="Carter N.P."/>
            <person name="Chapman J.C."/>
            <person name="Clamp M.E."/>
            <person name="Clark S.Y."/>
            <person name="Clarke G."/>
            <person name="Clee C.M."/>
            <person name="Clegg S.C."/>
            <person name="Cobley V."/>
            <person name="Collins J.E."/>
            <person name="Corby N."/>
            <person name="Coville G.J."/>
            <person name="Deloukas P."/>
            <person name="Dhami P."/>
            <person name="Dunham I."/>
            <person name="Dunn M."/>
            <person name="Earthrowl M.E."/>
            <person name="Ellington A.G."/>
            <person name="Faulkner L."/>
            <person name="Frankish A.G."/>
            <person name="Frankland J."/>
            <person name="French L."/>
            <person name="Garner P."/>
            <person name="Garnett J."/>
            <person name="Gilbert J.G.R."/>
            <person name="Gilson C.J."/>
            <person name="Ghori J."/>
            <person name="Grafham D.V."/>
            <person name="Gribble S.M."/>
            <person name="Griffiths C."/>
            <person name="Hall R.E."/>
            <person name="Hammond S."/>
            <person name="Harley J.L."/>
            <person name="Hart E.A."/>
            <person name="Heath P.D."/>
            <person name="Howden P.J."/>
            <person name="Huckle E.J."/>
            <person name="Hunt P.J."/>
            <person name="Hunt A.R."/>
            <person name="Johnson C."/>
            <person name="Johnson D."/>
            <person name="Kay M."/>
            <person name="Kimberley A.M."/>
            <person name="King A."/>
            <person name="Laird G.K."/>
            <person name="Langford C.J."/>
            <person name="Lawlor S."/>
            <person name="Leongamornlert D.A."/>
            <person name="Lloyd D.M."/>
            <person name="Lloyd C."/>
            <person name="Loveland J.E."/>
            <person name="Lovell J."/>
            <person name="Martin S."/>
            <person name="Mashreghi-Mohammadi M."/>
            <person name="McLaren S.J."/>
            <person name="McMurray A."/>
            <person name="Milne S."/>
            <person name="Moore M.J.F."/>
            <person name="Nickerson T."/>
            <person name="Palmer S.A."/>
            <person name="Pearce A.V."/>
            <person name="Peck A.I."/>
            <person name="Pelan S."/>
            <person name="Phillimore B."/>
            <person name="Porter K.M."/>
            <person name="Rice C.M."/>
            <person name="Searle S."/>
            <person name="Sehra H.K."/>
            <person name="Shownkeen R."/>
            <person name="Skuce C.D."/>
            <person name="Smith M."/>
            <person name="Steward C.A."/>
            <person name="Sycamore N."/>
            <person name="Tester J."/>
            <person name="Thomas D.W."/>
            <person name="Tracey A."/>
            <person name="Tromans A."/>
            <person name="Tubby B."/>
            <person name="Wall M."/>
            <person name="Wallis J.M."/>
            <person name="West A.P."/>
            <person name="Whitehead S.L."/>
            <person name="Willey D.L."/>
            <person name="Wilming L."/>
            <person name="Wray P.W."/>
            <person name="Wright M.W."/>
            <person name="Young L."/>
            <person name="Coulson A."/>
            <person name="Durbin R.M."/>
            <person name="Hubbard T."/>
            <person name="Sulston J.E."/>
            <person name="Beck S."/>
            <person name="Bentley D.R."/>
            <person name="Rogers J."/>
            <person name="Ross M.T."/>
        </authorList>
    </citation>
    <scope>NUCLEOTIDE SEQUENCE [LARGE SCALE GENOMIC DNA]</scope>
</reference>
<reference key="6">
    <citation type="submission" date="2005-07" db="EMBL/GenBank/DDBJ databases">
        <authorList>
            <person name="Mural R.J."/>
            <person name="Istrail S."/>
            <person name="Sutton G."/>
            <person name="Florea L."/>
            <person name="Halpern A.L."/>
            <person name="Mobarry C.M."/>
            <person name="Lippert R."/>
            <person name="Walenz B."/>
            <person name="Shatkay H."/>
            <person name="Dew I."/>
            <person name="Miller J.R."/>
            <person name="Flanigan M.J."/>
            <person name="Edwards N.J."/>
            <person name="Bolanos R."/>
            <person name="Fasulo D."/>
            <person name="Halldorsson B.V."/>
            <person name="Hannenhalli S."/>
            <person name="Turner R."/>
            <person name="Yooseph S."/>
            <person name="Lu F."/>
            <person name="Nusskern D.R."/>
            <person name="Shue B.C."/>
            <person name="Zheng X.H."/>
            <person name="Zhong F."/>
            <person name="Delcher A.L."/>
            <person name="Huson D.H."/>
            <person name="Kravitz S.A."/>
            <person name="Mouchard L."/>
            <person name="Reinert K."/>
            <person name="Remington K.A."/>
            <person name="Clark A.G."/>
            <person name="Waterman M.S."/>
            <person name="Eichler E.E."/>
            <person name="Adams M.D."/>
            <person name="Hunkapiller M.W."/>
            <person name="Myers E.W."/>
            <person name="Venter J.C."/>
        </authorList>
    </citation>
    <scope>NUCLEOTIDE SEQUENCE [LARGE SCALE GENOMIC DNA]</scope>
</reference>
<reference key="7">
    <citation type="journal article" date="2004" name="Genome Res.">
        <title>The status, quality, and expansion of the NIH full-length cDNA project: the Mammalian Gene Collection (MGC).</title>
        <authorList>
            <consortium name="The MGC Project Team"/>
        </authorList>
    </citation>
    <scope>NUCLEOTIDE SEQUENCE [LARGE SCALE MRNA] (ISOFORM 2)</scope>
    <source>
        <tissue>Brain</tissue>
    </source>
</reference>
<reference key="8">
    <citation type="submission" date="1999-03" db="EMBL/GenBank/DDBJ databases">
        <authorList>
            <person name="Machesky L.M."/>
            <person name="Insall R.H."/>
        </authorList>
    </citation>
    <scope>NUCLEOTIDE SEQUENCE [MRNA] OF 48-502 (ISOFORM 1)</scope>
</reference>
<reference key="9">
    <citation type="journal article" date="2007" name="J. Biol. Chem.">
        <title>c-Abl-mediated phosphorylation of WAVE3 is required for lamellipodia formation and cell migration.</title>
        <authorList>
            <person name="Sossey-Alaoui K."/>
            <person name="Li X."/>
            <person name="Cowell J.K."/>
        </authorList>
    </citation>
    <scope>FUNCTION</scope>
    <scope>PHOSPHORYLATION AT TYR-151; TYR-248; TYR-337 AND TYR-486</scope>
</reference>
<reference key="10">
    <citation type="journal article" date="2011" name="BMC Biol.">
        <title>Identification and characterization of a set of conserved and new regulators of cytoskeletal organisation, cell morphology and migration.</title>
        <authorList>
            <person name="Bai S.W."/>
            <person name="Herrera-Abreu M.T."/>
            <person name="Rohn J.L."/>
            <person name="Racine V."/>
            <person name="Tajadura V."/>
            <person name="Suryavanshi N."/>
            <person name="Bechtel S."/>
            <person name="Wiemann S."/>
            <person name="Baum B."/>
            <person name="Ridley A.J."/>
        </authorList>
    </citation>
    <scope>FUNCTION</scope>
</reference>
<keyword id="KW-0009">Actin-binding</keyword>
<keyword id="KW-0025">Alternative splicing</keyword>
<keyword id="KW-0175">Coiled coil</keyword>
<keyword id="KW-0963">Cytoplasm</keyword>
<keyword id="KW-0206">Cytoskeleton</keyword>
<keyword id="KW-0597">Phosphoprotein</keyword>
<keyword id="KW-1267">Proteomics identification</keyword>
<keyword id="KW-1185">Reference proteome</keyword>
<feature type="chain" id="PRO_0000188996" description="Actin-binding protein WASF3">
    <location>
        <begin position="1"/>
        <end position="502"/>
    </location>
</feature>
<feature type="domain" description="WH2" evidence="2">
    <location>
        <begin position="440"/>
        <end position="457"/>
    </location>
</feature>
<feature type="region of interest" description="Disordered" evidence="3">
    <location>
        <begin position="169"/>
        <end position="210"/>
    </location>
</feature>
<feature type="region of interest" description="Disordered" evidence="3">
    <location>
        <begin position="223"/>
        <end position="443"/>
    </location>
</feature>
<feature type="coiled-coil region" evidence="1">
    <location>
        <begin position="57"/>
        <end position="93"/>
    </location>
</feature>
<feature type="coiled-coil region" evidence="1">
    <location>
        <begin position="162"/>
        <end position="206"/>
    </location>
</feature>
<feature type="compositionally biased region" description="Basic and acidic residues" evidence="3">
    <location>
        <begin position="182"/>
        <end position="192"/>
    </location>
</feature>
<feature type="compositionally biased region" description="Polar residues" evidence="3">
    <location>
        <begin position="223"/>
        <end position="237"/>
    </location>
</feature>
<feature type="compositionally biased region" description="Pro residues" evidence="3">
    <location>
        <begin position="302"/>
        <end position="312"/>
    </location>
</feature>
<feature type="compositionally biased region" description="Pro residues" evidence="3">
    <location>
        <begin position="341"/>
        <end position="352"/>
    </location>
</feature>
<feature type="compositionally biased region" description="Pro residues" evidence="3">
    <location>
        <begin position="394"/>
        <end position="410"/>
    </location>
</feature>
<feature type="compositionally biased region" description="Low complexity" evidence="3">
    <location>
        <begin position="411"/>
        <end position="423"/>
    </location>
</feature>
<feature type="modified residue" description="Phosphotyrosine; by ABL1" evidence="4">
    <location>
        <position position="151"/>
    </location>
</feature>
<feature type="modified residue" description="Phosphotyrosine; by ABL1" evidence="4">
    <location>
        <position position="248"/>
    </location>
</feature>
<feature type="modified residue" description="Phosphotyrosine; by ABL1" evidence="4">
    <location>
        <position position="337"/>
    </location>
</feature>
<feature type="modified residue" description="Phosphotyrosine; by ABL1" evidence="4">
    <location>
        <position position="486"/>
    </location>
</feature>
<feature type="splice variant" id="VSP_054517" description="In isoform 2." evidence="6">
    <original>EQKRIDGTTREVKKVRKARNRRQEWNMMAYDKELRPDNRLSQSVYHGASSEGSLSPDTR</original>
    <variation>REKHKLNPNRNQQVNVRKVRTRKEEWERRKMGIEFMSDAKKLEQAGSAKEDRVPSG</variation>
    <location>
        <begin position="181"/>
        <end position="239"/>
    </location>
</feature>
<feature type="sequence variant" id="VAR_052953" description="In dbSNP:rs17084492.">
    <original>S</original>
    <variation>L</variation>
    <location>
        <position position="415"/>
    </location>
</feature>
<feature type="sequence conflict" description="In Ref. 1 and 2." evidence="7" ref="1 2">
    <original>PP</original>
    <variation>RR</variation>
    <location>
        <begin position="307"/>
        <end position="308"/>
    </location>
</feature>
<name>WASF3_HUMAN</name>